<accession>Q5BGG1</accession>
<accession>C8VTR8</accession>
<name>MAP22_EMENI</name>
<sequence length="458" mass="50186">MGSKTPERDGHKGQENTTGPVECPLGGMPRGMHLATDGDGTIGDSGDDDDGEAHSTALINANANGNQKKKRKSKKKGKKKAAKQSSPPRVPLSQLFLQGKYPIGEVQEYQPNVENTSRTTAEEVRYKSRSHLEDDSFLNDYRKAAEVHRQVRKWTQERVKPGQGLMEIAEDIDDGVRALLGHAGLEPGDSLKAGLGFPTGLSLNNVVAHYTPNPGQKDIILQSSDVMKVDFGVHINGWIVDSAFTMTFDPVYDNLLAAVKDATNAGLKTAGIDVRISDVSAAIQEAMESYEVEIGGKTFPVKAVRNITGHNIKHYQIHGGKSVPFVKNSDQTKMEEGEIFAIETFGSTGRGYIYDDVGVYGYGKSYDAPRQVSLPLASARSLYKTINENFGTIVFCRRYLDRLGLQRYLAGMNTLVQHGVVDVYAPLVDIKGSYSAQFEHTVLLRESNKEVISRGDDY</sequence>
<proteinExistence type="inferred from homology"/>
<gene>
    <name type="ORF">AN0369</name>
</gene>
<feature type="chain" id="PRO_0000407628" description="Methionine aminopeptidase 2-2">
    <location>
        <begin position="1"/>
        <end position="458"/>
    </location>
</feature>
<feature type="region of interest" description="Disordered" evidence="2">
    <location>
        <begin position="1"/>
        <end position="93"/>
    </location>
</feature>
<feature type="compositionally biased region" description="Basic and acidic residues" evidence="2">
    <location>
        <begin position="1"/>
        <end position="14"/>
    </location>
</feature>
<feature type="compositionally biased region" description="Basic residues" evidence="2">
    <location>
        <begin position="67"/>
        <end position="82"/>
    </location>
</feature>
<feature type="binding site" evidence="1">
    <location>
        <position position="209"/>
    </location>
    <ligand>
        <name>substrate</name>
    </ligand>
</feature>
<feature type="binding site" evidence="1">
    <location>
        <position position="230"/>
    </location>
    <ligand>
        <name>a divalent metal cation</name>
        <dbReference type="ChEBI" id="CHEBI:60240"/>
        <label>1</label>
    </ligand>
</feature>
<feature type="binding site" evidence="1">
    <location>
        <position position="241"/>
    </location>
    <ligand>
        <name>a divalent metal cation</name>
        <dbReference type="ChEBI" id="CHEBI:60240"/>
        <label>1</label>
    </ligand>
</feature>
<feature type="binding site" evidence="1">
    <location>
        <position position="241"/>
    </location>
    <ligand>
        <name>a divalent metal cation</name>
        <dbReference type="ChEBI" id="CHEBI:60240"/>
        <label>2</label>
        <note>catalytic</note>
    </ligand>
</feature>
<feature type="binding site" evidence="1">
    <location>
        <position position="310"/>
    </location>
    <ligand>
        <name>a divalent metal cation</name>
        <dbReference type="ChEBI" id="CHEBI:60240"/>
        <label>2</label>
        <note>catalytic</note>
    </ligand>
</feature>
<feature type="binding site" evidence="1">
    <location>
        <position position="318"/>
    </location>
    <ligand>
        <name>substrate</name>
    </ligand>
</feature>
<feature type="binding site" evidence="1">
    <location>
        <position position="343"/>
    </location>
    <ligand>
        <name>a divalent metal cation</name>
        <dbReference type="ChEBI" id="CHEBI:60240"/>
        <label>2</label>
        <note>catalytic</note>
    </ligand>
</feature>
<feature type="binding site" evidence="1">
    <location>
        <position position="439"/>
    </location>
    <ligand>
        <name>a divalent metal cation</name>
        <dbReference type="ChEBI" id="CHEBI:60240"/>
        <label>1</label>
    </ligand>
</feature>
<feature type="binding site" evidence="1">
    <location>
        <position position="439"/>
    </location>
    <ligand>
        <name>a divalent metal cation</name>
        <dbReference type="ChEBI" id="CHEBI:60240"/>
        <label>2</label>
        <note>catalytic</note>
    </ligand>
</feature>
<reference key="1">
    <citation type="journal article" date="2005" name="Nature">
        <title>Sequencing of Aspergillus nidulans and comparative analysis with A. fumigatus and A. oryzae.</title>
        <authorList>
            <person name="Galagan J.E."/>
            <person name="Calvo S.E."/>
            <person name="Cuomo C."/>
            <person name="Ma L.-J."/>
            <person name="Wortman J.R."/>
            <person name="Batzoglou S."/>
            <person name="Lee S.-I."/>
            <person name="Bastuerkmen M."/>
            <person name="Spevak C.C."/>
            <person name="Clutterbuck J."/>
            <person name="Kapitonov V."/>
            <person name="Jurka J."/>
            <person name="Scazzocchio C."/>
            <person name="Farman M.L."/>
            <person name="Butler J."/>
            <person name="Purcell S."/>
            <person name="Harris S."/>
            <person name="Braus G.H."/>
            <person name="Draht O."/>
            <person name="Busch S."/>
            <person name="D'Enfert C."/>
            <person name="Bouchier C."/>
            <person name="Goldman G.H."/>
            <person name="Bell-Pedersen D."/>
            <person name="Griffiths-Jones S."/>
            <person name="Doonan J.H."/>
            <person name="Yu J."/>
            <person name="Vienken K."/>
            <person name="Pain A."/>
            <person name="Freitag M."/>
            <person name="Selker E.U."/>
            <person name="Archer D.B."/>
            <person name="Penalva M.A."/>
            <person name="Oakley B.R."/>
            <person name="Momany M."/>
            <person name="Tanaka T."/>
            <person name="Kumagai T."/>
            <person name="Asai K."/>
            <person name="Machida M."/>
            <person name="Nierman W.C."/>
            <person name="Denning D.W."/>
            <person name="Caddick M.X."/>
            <person name="Hynes M."/>
            <person name="Paoletti M."/>
            <person name="Fischer R."/>
            <person name="Miller B.L."/>
            <person name="Dyer P.S."/>
            <person name="Sachs M.S."/>
            <person name="Osmani S.A."/>
            <person name="Birren B.W."/>
        </authorList>
    </citation>
    <scope>NUCLEOTIDE SEQUENCE [LARGE SCALE GENOMIC DNA]</scope>
    <source>
        <strain>FGSC A4 / ATCC 38163 / CBS 112.46 / NRRL 194 / M139</strain>
    </source>
</reference>
<reference key="2">
    <citation type="journal article" date="2009" name="Fungal Genet. Biol.">
        <title>The 2008 update of the Aspergillus nidulans genome annotation: a community effort.</title>
        <authorList>
            <person name="Wortman J.R."/>
            <person name="Gilsenan J.M."/>
            <person name="Joardar V."/>
            <person name="Deegan J."/>
            <person name="Clutterbuck J."/>
            <person name="Andersen M.R."/>
            <person name="Archer D."/>
            <person name="Bencina M."/>
            <person name="Braus G."/>
            <person name="Coutinho P."/>
            <person name="von Dohren H."/>
            <person name="Doonan J."/>
            <person name="Driessen A.J."/>
            <person name="Durek P."/>
            <person name="Espeso E."/>
            <person name="Fekete E."/>
            <person name="Flipphi M."/>
            <person name="Estrada C.G."/>
            <person name="Geysens S."/>
            <person name="Goldman G."/>
            <person name="de Groot P.W."/>
            <person name="Hansen K."/>
            <person name="Harris S.D."/>
            <person name="Heinekamp T."/>
            <person name="Helmstaedt K."/>
            <person name="Henrissat B."/>
            <person name="Hofmann G."/>
            <person name="Homan T."/>
            <person name="Horio T."/>
            <person name="Horiuchi H."/>
            <person name="James S."/>
            <person name="Jones M."/>
            <person name="Karaffa L."/>
            <person name="Karanyi Z."/>
            <person name="Kato M."/>
            <person name="Keller N."/>
            <person name="Kelly D.E."/>
            <person name="Kiel J.A."/>
            <person name="Kim J.M."/>
            <person name="van der Klei I.J."/>
            <person name="Klis F.M."/>
            <person name="Kovalchuk A."/>
            <person name="Krasevec N."/>
            <person name="Kubicek C.P."/>
            <person name="Liu B."/>
            <person name="Maccabe A."/>
            <person name="Meyer V."/>
            <person name="Mirabito P."/>
            <person name="Miskei M."/>
            <person name="Mos M."/>
            <person name="Mullins J."/>
            <person name="Nelson D.R."/>
            <person name="Nielsen J."/>
            <person name="Oakley B.R."/>
            <person name="Osmani S.A."/>
            <person name="Pakula T."/>
            <person name="Paszewski A."/>
            <person name="Paulsen I."/>
            <person name="Pilsyk S."/>
            <person name="Pocsi I."/>
            <person name="Punt P.J."/>
            <person name="Ram A.F."/>
            <person name="Ren Q."/>
            <person name="Robellet X."/>
            <person name="Robson G."/>
            <person name="Seiboth B."/>
            <person name="van Solingen P."/>
            <person name="Specht T."/>
            <person name="Sun J."/>
            <person name="Taheri-Talesh N."/>
            <person name="Takeshita N."/>
            <person name="Ussery D."/>
            <person name="vanKuyk P.A."/>
            <person name="Visser H."/>
            <person name="van de Vondervoort P.J."/>
            <person name="de Vries R.P."/>
            <person name="Walton J."/>
            <person name="Xiang X."/>
            <person name="Xiong Y."/>
            <person name="Zeng A.P."/>
            <person name="Brandt B.W."/>
            <person name="Cornell M.J."/>
            <person name="van den Hondel C.A."/>
            <person name="Visser J."/>
            <person name="Oliver S.G."/>
            <person name="Turner G."/>
        </authorList>
    </citation>
    <scope>GENOME REANNOTATION</scope>
    <source>
        <strain>FGSC A4 / ATCC 38163 / CBS 112.46 / NRRL 194 / M139</strain>
    </source>
</reference>
<protein>
    <recommendedName>
        <fullName evidence="1">Methionine aminopeptidase 2-2</fullName>
        <shortName evidence="1">MAP 2-2</shortName>
        <shortName evidence="1">MetAP 2-2</shortName>
        <ecNumber evidence="1">3.4.11.18</ecNumber>
    </recommendedName>
    <alternativeName>
        <fullName evidence="1">Peptidase M</fullName>
    </alternativeName>
</protein>
<dbReference type="EC" id="3.4.11.18" evidence="1"/>
<dbReference type="EMBL" id="AACD01000006">
    <property type="protein sequence ID" value="EAA65775.1"/>
    <property type="status" value="ALT_SEQ"/>
    <property type="molecule type" value="Genomic_DNA"/>
</dbReference>
<dbReference type="EMBL" id="BN001308">
    <property type="protein sequence ID" value="CBF89626.1"/>
    <property type="molecule type" value="Genomic_DNA"/>
</dbReference>
<dbReference type="RefSeq" id="XP_657973.1">
    <property type="nucleotide sequence ID" value="XM_652881.1"/>
</dbReference>
<dbReference type="SMR" id="Q5BGG1"/>
<dbReference type="FunCoup" id="Q5BGG1">
    <property type="interactions" value="1149"/>
</dbReference>
<dbReference type="STRING" id="227321.Q5BGG1"/>
<dbReference type="MEROPS" id="M24.002"/>
<dbReference type="EnsemblFungi" id="CBF89626">
    <property type="protein sequence ID" value="CBF89626"/>
    <property type="gene ID" value="ANIA_00369"/>
</dbReference>
<dbReference type="VEuPathDB" id="FungiDB:AN0369"/>
<dbReference type="eggNOG" id="KOG2775">
    <property type="taxonomic scope" value="Eukaryota"/>
</dbReference>
<dbReference type="HOGENOM" id="CLU_015857_7_1_1"/>
<dbReference type="InParanoid" id="Q5BGG1"/>
<dbReference type="OMA" id="ILRYHIH"/>
<dbReference type="OrthoDB" id="7848262at2759"/>
<dbReference type="Proteomes" id="UP000000560">
    <property type="component" value="Chromosome VIII"/>
</dbReference>
<dbReference type="GO" id="GO:0005737">
    <property type="term" value="C:cytoplasm"/>
    <property type="evidence" value="ECO:0000318"/>
    <property type="project" value="GO_Central"/>
</dbReference>
<dbReference type="GO" id="GO:0004177">
    <property type="term" value="F:aminopeptidase activity"/>
    <property type="evidence" value="ECO:0000318"/>
    <property type="project" value="GO_Central"/>
</dbReference>
<dbReference type="GO" id="GO:0004239">
    <property type="term" value="F:initiator methionyl aminopeptidase activity"/>
    <property type="evidence" value="ECO:0007669"/>
    <property type="project" value="UniProtKB-UniRule"/>
</dbReference>
<dbReference type="GO" id="GO:0046872">
    <property type="term" value="F:metal ion binding"/>
    <property type="evidence" value="ECO:0007669"/>
    <property type="project" value="UniProtKB-UniRule"/>
</dbReference>
<dbReference type="GO" id="GO:0070006">
    <property type="term" value="F:metalloaminopeptidase activity"/>
    <property type="evidence" value="ECO:0007669"/>
    <property type="project" value="UniProtKB-UniRule"/>
</dbReference>
<dbReference type="GO" id="GO:0008235">
    <property type="term" value="F:metalloexopeptidase activity"/>
    <property type="evidence" value="ECO:0000318"/>
    <property type="project" value="GO_Central"/>
</dbReference>
<dbReference type="GO" id="GO:0006508">
    <property type="term" value="P:proteolysis"/>
    <property type="evidence" value="ECO:0007669"/>
    <property type="project" value="UniProtKB-KW"/>
</dbReference>
<dbReference type="CDD" id="cd01088">
    <property type="entry name" value="MetAP2"/>
    <property type="match status" value="1"/>
</dbReference>
<dbReference type="Gene3D" id="3.90.230.10">
    <property type="entry name" value="Creatinase/methionine aminopeptidase superfamily"/>
    <property type="match status" value="1"/>
</dbReference>
<dbReference type="Gene3D" id="1.10.10.10">
    <property type="entry name" value="Winged helix-like DNA-binding domain superfamily/Winged helix DNA-binding domain"/>
    <property type="match status" value="1"/>
</dbReference>
<dbReference type="HAMAP" id="MF_03175">
    <property type="entry name" value="MetAP_2_euk"/>
    <property type="match status" value="1"/>
</dbReference>
<dbReference type="InterPro" id="IPR036005">
    <property type="entry name" value="Creatinase/aminopeptidase-like"/>
</dbReference>
<dbReference type="InterPro" id="IPR050247">
    <property type="entry name" value="Met_Aminopeptidase_Type2"/>
</dbReference>
<dbReference type="InterPro" id="IPR000994">
    <property type="entry name" value="Pept_M24"/>
</dbReference>
<dbReference type="InterPro" id="IPR001714">
    <property type="entry name" value="Pept_M24_MAP"/>
</dbReference>
<dbReference type="InterPro" id="IPR002468">
    <property type="entry name" value="Pept_M24A_MAP2"/>
</dbReference>
<dbReference type="InterPro" id="IPR018349">
    <property type="entry name" value="Pept_M24A_MAP2_BS"/>
</dbReference>
<dbReference type="InterPro" id="IPR036388">
    <property type="entry name" value="WH-like_DNA-bd_sf"/>
</dbReference>
<dbReference type="InterPro" id="IPR036390">
    <property type="entry name" value="WH_DNA-bd_sf"/>
</dbReference>
<dbReference type="NCBIfam" id="TIGR00501">
    <property type="entry name" value="met_pdase_II"/>
    <property type="match status" value="1"/>
</dbReference>
<dbReference type="PANTHER" id="PTHR45777">
    <property type="entry name" value="METHIONINE AMINOPEPTIDASE 2"/>
    <property type="match status" value="1"/>
</dbReference>
<dbReference type="PANTHER" id="PTHR45777:SF1">
    <property type="entry name" value="METHIONINE AMINOPEPTIDASE 2-2"/>
    <property type="match status" value="1"/>
</dbReference>
<dbReference type="Pfam" id="PF00557">
    <property type="entry name" value="Peptidase_M24"/>
    <property type="match status" value="1"/>
</dbReference>
<dbReference type="PRINTS" id="PR00599">
    <property type="entry name" value="MAPEPTIDASE"/>
</dbReference>
<dbReference type="SUPFAM" id="SSF55920">
    <property type="entry name" value="Creatinase/aminopeptidase"/>
    <property type="match status" value="1"/>
</dbReference>
<dbReference type="SUPFAM" id="SSF46785">
    <property type="entry name" value="Winged helix' DNA-binding domain"/>
    <property type="match status" value="1"/>
</dbReference>
<dbReference type="PROSITE" id="PS01202">
    <property type="entry name" value="MAP_2"/>
    <property type="match status" value="1"/>
</dbReference>
<keyword id="KW-0031">Aminopeptidase</keyword>
<keyword id="KW-0963">Cytoplasm</keyword>
<keyword id="KW-0378">Hydrolase</keyword>
<keyword id="KW-0479">Metal-binding</keyword>
<keyword id="KW-0645">Protease</keyword>
<keyword id="KW-1185">Reference proteome</keyword>
<evidence type="ECO:0000255" key="1">
    <source>
        <dbReference type="HAMAP-Rule" id="MF_03175"/>
    </source>
</evidence>
<evidence type="ECO:0000256" key="2">
    <source>
        <dbReference type="SAM" id="MobiDB-lite"/>
    </source>
</evidence>
<evidence type="ECO:0000305" key="3"/>
<organism>
    <name type="scientific">Emericella nidulans (strain FGSC A4 / ATCC 38163 / CBS 112.46 / NRRL 194 / M139)</name>
    <name type="common">Aspergillus nidulans</name>
    <dbReference type="NCBI Taxonomy" id="227321"/>
    <lineage>
        <taxon>Eukaryota</taxon>
        <taxon>Fungi</taxon>
        <taxon>Dikarya</taxon>
        <taxon>Ascomycota</taxon>
        <taxon>Pezizomycotina</taxon>
        <taxon>Eurotiomycetes</taxon>
        <taxon>Eurotiomycetidae</taxon>
        <taxon>Eurotiales</taxon>
        <taxon>Aspergillaceae</taxon>
        <taxon>Aspergillus</taxon>
        <taxon>Aspergillus subgen. Nidulantes</taxon>
    </lineage>
</organism>
<comment type="function">
    <text evidence="1">Cotranslationally removes the N-terminal methionine from nascent proteins. The N-terminal methionine is often cleaved when the second residue in the primary sequence is small and uncharged (Met-Ala-, Cys, Gly, Pro, Ser, Thr, or Val).</text>
</comment>
<comment type="catalytic activity">
    <reaction evidence="1">
        <text>Release of N-terminal amino acids, preferentially methionine, from peptides and arylamides.</text>
        <dbReference type="EC" id="3.4.11.18"/>
    </reaction>
</comment>
<comment type="cofactor">
    <cofactor evidence="1">
        <name>Co(2+)</name>
        <dbReference type="ChEBI" id="CHEBI:48828"/>
    </cofactor>
    <cofactor evidence="1">
        <name>Zn(2+)</name>
        <dbReference type="ChEBI" id="CHEBI:29105"/>
    </cofactor>
    <cofactor evidence="1">
        <name>Mn(2+)</name>
        <dbReference type="ChEBI" id="CHEBI:29035"/>
    </cofactor>
    <cofactor evidence="1">
        <name>Fe(2+)</name>
        <dbReference type="ChEBI" id="CHEBI:29033"/>
    </cofactor>
    <text evidence="1">Binds 2 divalent metal cations per subunit. Has a high-affinity and a low affinity metal-binding site. The true nature of the physiological cofactor is under debate. The enzyme is active with cobalt, zinc, manganese or divalent iron ions. Most likely, methionine aminopeptidases function as mononuclear Fe(2+)-metalloproteases under physiological conditions, and the catalytically relevant metal-binding site has been assigned to the histidine-containing high-affinity site.</text>
</comment>
<comment type="subcellular location">
    <subcellularLocation>
        <location evidence="1">Cytoplasm</location>
    </subcellularLocation>
</comment>
<comment type="similarity">
    <text evidence="1">Belongs to the peptidase M24A family. Methionine aminopeptidase eukaryotic type 2 subfamily.</text>
</comment>
<comment type="sequence caution" evidence="3">
    <conflict type="erroneous gene model prediction">
        <sequence resource="EMBL-CDS" id="EAA65775"/>
    </conflict>
</comment>